<feature type="chain" id="PRO_0000188148" description="ATP synthase epsilon chain">
    <location>
        <begin position="1"/>
        <end position="141"/>
    </location>
</feature>
<gene>
    <name evidence="1" type="primary">atpC</name>
    <name type="ordered locus">llmg_1945</name>
</gene>
<sequence length="141" mass="15585">MSENVMTLQVITPAGVVYDHHANYITARTTNGEIGILPNMISTITGLEIDELKVSRPDDETHVDYIAVNGGIIEIKDSLVTIVADSAERNRDIDVSRAERAKIRAEKALEVAKAEKKSDEIKRVEVALHRALNRLNVSSHN</sequence>
<protein>
    <recommendedName>
        <fullName evidence="1">ATP synthase epsilon chain</fullName>
    </recommendedName>
    <alternativeName>
        <fullName evidence="1">ATP synthase F1 sector epsilon subunit</fullName>
    </alternativeName>
    <alternativeName>
        <fullName evidence="1">F-ATPase epsilon subunit</fullName>
    </alternativeName>
</protein>
<reference key="1">
    <citation type="journal article" date="2000" name="J. Bacteriol.">
        <title>The membrane bound H+-ATPase complex is essential for growth of Lactococcus lactis.</title>
        <authorList>
            <person name="Koebmann B.J."/>
            <person name="Nilsson D."/>
            <person name="Kuipers O.P."/>
            <person name="Jensen P.R."/>
        </authorList>
    </citation>
    <scope>NUCLEOTIDE SEQUENCE [GENOMIC DNA]</scope>
</reference>
<reference key="2">
    <citation type="journal article" date="2007" name="J. Bacteriol.">
        <title>The complete genome sequence of the lactic acid bacterial paradigm Lactococcus lactis subsp. cremoris MG1363.</title>
        <authorList>
            <person name="Wegmann U."/>
            <person name="O'Connell-Motherway M."/>
            <person name="Zomer A."/>
            <person name="Buist G."/>
            <person name="Shearman C."/>
            <person name="Canchaya C."/>
            <person name="Ventura M."/>
            <person name="Goesmann A."/>
            <person name="Gasson M.J."/>
            <person name="Kuipers O.P."/>
            <person name="van Sinderen D."/>
            <person name="Kok J."/>
        </authorList>
    </citation>
    <scope>NUCLEOTIDE SEQUENCE [LARGE SCALE GENOMIC DNA]</scope>
    <source>
        <strain>MG1363</strain>
    </source>
</reference>
<evidence type="ECO:0000255" key="1">
    <source>
        <dbReference type="HAMAP-Rule" id="MF_00530"/>
    </source>
</evidence>
<keyword id="KW-0066">ATP synthesis</keyword>
<keyword id="KW-1003">Cell membrane</keyword>
<keyword id="KW-0139">CF(1)</keyword>
<keyword id="KW-0375">Hydrogen ion transport</keyword>
<keyword id="KW-0406">Ion transport</keyword>
<keyword id="KW-0472">Membrane</keyword>
<keyword id="KW-0813">Transport</keyword>
<comment type="function">
    <text>Produces ATP from ADP in the presence of a proton gradient across the membrane.</text>
</comment>
<comment type="subunit">
    <text>F-type ATPases have 2 components, CF(1) - the catalytic core - and CF(0) - the membrane proton channel. CF(1) has five subunits: alpha(3), beta(3), gamma(1), delta(1), epsilon(1). CF(0) has three main subunits: a, b and c.</text>
</comment>
<comment type="subcellular location">
    <subcellularLocation>
        <location evidence="1">Cell membrane</location>
        <topology evidence="1">Peripheral membrane protein</topology>
    </subcellularLocation>
</comment>
<comment type="similarity">
    <text evidence="1">Belongs to the ATPase epsilon chain family.</text>
</comment>
<accession>Q9RAT9</accession>
<accession>A2RMI1</accession>
<organism>
    <name type="scientific">Lactococcus lactis subsp. cremoris (strain MG1363)</name>
    <dbReference type="NCBI Taxonomy" id="416870"/>
    <lineage>
        <taxon>Bacteria</taxon>
        <taxon>Bacillati</taxon>
        <taxon>Bacillota</taxon>
        <taxon>Bacilli</taxon>
        <taxon>Lactobacillales</taxon>
        <taxon>Streptococcaceae</taxon>
        <taxon>Lactococcus</taxon>
        <taxon>Lactococcus cremoris subsp. cremoris</taxon>
    </lineage>
</organism>
<name>ATPE_LACLM</name>
<proteinExistence type="inferred from homology"/>
<dbReference type="EMBL" id="AF059739">
    <property type="protein sequence ID" value="AAF02208.1"/>
    <property type="molecule type" value="Genomic_DNA"/>
</dbReference>
<dbReference type="EMBL" id="AM406671">
    <property type="protein sequence ID" value="CAL98513.1"/>
    <property type="molecule type" value="Genomic_DNA"/>
</dbReference>
<dbReference type="RefSeq" id="WP_011835688.1">
    <property type="nucleotide sequence ID" value="NC_009004.1"/>
</dbReference>
<dbReference type="SMR" id="Q9RAT9"/>
<dbReference type="STRING" id="416870.llmg_1945"/>
<dbReference type="KEGG" id="llm:llmg_1945"/>
<dbReference type="eggNOG" id="COG0355">
    <property type="taxonomic scope" value="Bacteria"/>
</dbReference>
<dbReference type="HOGENOM" id="CLU_084338_1_0_9"/>
<dbReference type="OrthoDB" id="9804110at2"/>
<dbReference type="PhylomeDB" id="Q9RAT9"/>
<dbReference type="Proteomes" id="UP000000364">
    <property type="component" value="Chromosome"/>
</dbReference>
<dbReference type="GO" id="GO:0005886">
    <property type="term" value="C:plasma membrane"/>
    <property type="evidence" value="ECO:0007669"/>
    <property type="project" value="UniProtKB-SubCell"/>
</dbReference>
<dbReference type="GO" id="GO:0045259">
    <property type="term" value="C:proton-transporting ATP synthase complex"/>
    <property type="evidence" value="ECO:0007669"/>
    <property type="project" value="UniProtKB-KW"/>
</dbReference>
<dbReference type="GO" id="GO:0005524">
    <property type="term" value="F:ATP binding"/>
    <property type="evidence" value="ECO:0007669"/>
    <property type="project" value="UniProtKB-UniRule"/>
</dbReference>
<dbReference type="GO" id="GO:0046933">
    <property type="term" value="F:proton-transporting ATP synthase activity, rotational mechanism"/>
    <property type="evidence" value="ECO:0007669"/>
    <property type="project" value="UniProtKB-UniRule"/>
</dbReference>
<dbReference type="CDD" id="cd12152">
    <property type="entry name" value="F1-ATPase_delta"/>
    <property type="match status" value="1"/>
</dbReference>
<dbReference type="Gene3D" id="1.20.5.440">
    <property type="entry name" value="ATP synthase delta/epsilon subunit, C-terminal domain"/>
    <property type="match status" value="1"/>
</dbReference>
<dbReference type="Gene3D" id="2.60.15.10">
    <property type="entry name" value="F0F1 ATP synthase delta/epsilon subunit, N-terminal"/>
    <property type="match status" value="1"/>
</dbReference>
<dbReference type="HAMAP" id="MF_00530">
    <property type="entry name" value="ATP_synth_epsil_bac"/>
    <property type="match status" value="1"/>
</dbReference>
<dbReference type="InterPro" id="IPR001469">
    <property type="entry name" value="ATP_synth_F1_dsu/esu"/>
</dbReference>
<dbReference type="InterPro" id="IPR020546">
    <property type="entry name" value="ATP_synth_F1_dsu/esu_N"/>
</dbReference>
<dbReference type="InterPro" id="IPR020547">
    <property type="entry name" value="ATP_synth_F1_esu_C"/>
</dbReference>
<dbReference type="InterPro" id="IPR036771">
    <property type="entry name" value="ATPsynth_dsu/esu_N"/>
</dbReference>
<dbReference type="NCBIfam" id="TIGR01216">
    <property type="entry name" value="ATP_synt_epsi"/>
    <property type="match status" value="1"/>
</dbReference>
<dbReference type="NCBIfam" id="NF001846">
    <property type="entry name" value="PRK00571.1-3"/>
    <property type="match status" value="1"/>
</dbReference>
<dbReference type="PANTHER" id="PTHR13822">
    <property type="entry name" value="ATP SYNTHASE DELTA/EPSILON CHAIN"/>
    <property type="match status" value="1"/>
</dbReference>
<dbReference type="PANTHER" id="PTHR13822:SF10">
    <property type="entry name" value="ATP SYNTHASE EPSILON CHAIN, CHLOROPLASTIC"/>
    <property type="match status" value="1"/>
</dbReference>
<dbReference type="Pfam" id="PF00401">
    <property type="entry name" value="ATP-synt_DE"/>
    <property type="match status" value="1"/>
</dbReference>
<dbReference type="Pfam" id="PF02823">
    <property type="entry name" value="ATP-synt_DE_N"/>
    <property type="match status" value="1"/>
</dbReference>
<dbReference type="SUPFAM" id="SSF51344">
    <property type="entry name" value="Epsilon subunit of F1F0-ATP synthase N-terminal domain"/>
    <property type="match status" value="1"/>
</dbReference>